<protein>
    <recommendedName>
        <fullName>Endochitinase 11</fullName>
        <ecNumber>3.2.1.14</ecNumber>
    </recommendedName>
    <alternativeName>
        <fullName>Chitinase 11</fullName>
    </alternativeName>
</protein>
<dbReference type="EC" id="3.2.1.14"/>
<dbReference type="EMBL" id="AF036320">
    <property type="protein sequence ID" value="AAC33265.1"/>
    <property type="molecule type" value="mRNA"/>
</dbReference>
<dbReference type="SMR" id="O74199"/>
<dbReference type="CAZy" id="GH18">
    <property type="family name" value="Glycoside Hydrolase Family 18"/>
</dbReference>
<dbReference type="GlyCosmos" id="O74199">
    <property type="glycosylation" value="4 sites, No reported glycans"/>
</dbReference>
<dbReference type="GO" id="GO:0005576">
    <property type="term" value="C:extracellular region"/>
    <property type="evidence" value="ECO:0007669"/>
    <property type="project" value="UniProtKB-SubCell"/>
</dbReference>
<dbReference type="GO" id="GO:0008061">
    <property type="term" value="F:chitin binding"/>
    <property type="evidence" value="ECO:0007669"/>
    <property type="project" value="UniProtKB-KW"/>
</dbReference>
<dbReference type="GO" id="GO:0008843">
    <property type="term" value="F:endochitinase activity"/>
    <property type="evidence" value="ECO:0007669"/>
    <property type="project" value="UniProtKB-EC"/>
</dbReference>
<dbReference type="GO" id="GO:0006032">
    <property type="term" value="P:chitin catabolic process"/>
    <property type="evidence" value="ECO:0007669"/>
    <property type="project" value="UniProtKB-KW"/>
</dbReference>
<dbReference type="GO" id="GO:0000272">
    <property type="term" value="P:polysaccharide catabolic process"/>
    <property type="evidence" value="ECO:0007669"/>
    <property type="project" value="UniProtKB-KW"/>
</dbReference>
<dbReference type="CDD" id="cd06543">
    <property type="entry name" value="GH18_PF-ChiA-like"/>
    <property type="match status" value="1"/>
</dbReference>
<dbReference type="FunFam" id="3.20.20.80:FF:000118">
    <property type="entry name" value="Probable bifunctional chitinase/lysozyme"/>
    <property type="match status" value="1"/>
</dbReference>
<dbReference type="Gene3D" id="3.20.20.80">
    <property type="entry name" value="Glycosidases"/>
    <property type="match status" value="1"/>
</dbReference>
<dbReference type="InterPro" id="IPR052750">
    <property type="entry name" value="GH18_Chitinase"/>
</dbReference>
<dbReference type="InterPro" id="IPR001223">
    <property type="entry name" value="Glyco_hydro18_cat"/>
</dbReference>
<dbReference type="InterPro" id="IPR017853">
    <property type="entry name" value="Glycoside_hydrolase_SF"/>
</dbReference>
<dbReference type="PANTHER" id="PTHR42976">
    <property type="entry name" value="BIFUNCTIONAL CHITINASE/LYSOZYME-RELATED"/>
    <property type="match status" value="1"/>
</dbReference>
<dbReference type="PANTHER" id="PTHR42976:SF1">
    <property type="entry name" value="GH18 DOMAIN-CONTAINING PROTEIN-RELATED"/>
    <property type="match status" value="1"/>
</dbReference>
<dbReference type="Pfam" id="PF00704">
    <property type="entry name" value="Glyco_hydro_18"/>
    <property type="match status" value="1"/>
</dbReference>
<dbReference type="SUPFAM" id="SSF51445">
    <property type="entry name" value="(Trans)glycosidases"/>
    <property type="match status" value="1"/>
</dbReference>
<dbReference type="PROSITE" id="PS51910">
    <property type="entry name" value="GH18_2"/>
    <property type="match status" value="1"/>
</dbReference>
<reference key="1">
    <citation type="journal article" date="1998" name="FEMS Microbiol. Lett.">
        <title>Isolation and characterization of a chitinase cDNA from the entomopathogenic fungus, Metarhizium anisopliae.</title>
        <authorList>
            <person name="Kang S.C."/>
            <person name="Park S."/>
            <person name="Lee D.G."/>
        </authorList>
    </citation>
    <scope>NUCLEOTIDE SEQUENCE [MRNA]</scope>
</reference>
<reference key="2">
    <citation type="journal article" date="1999" name="J. Invertebr. Pathol.">
        <title>Purification and characterization of a novel chitinase from the entomopathogenic fungus, Metarhizium anisopliae.</title>
        <authorList>
            <person name="Kang S.C."/>
            <person name="Park S."/>
            <person name="Lee D.G."/>
        </authorList>
    </citation>
    <scope>SUBCELLULAR LOCATION</scope>
    <scope>FUNCTION</scope>
    <scope>CATALYTIC ACTIVITY</scope>
    <scope>BIOPHYSICOCHEMICAL PROPERTIES</scope>
</reference>
<organism>
    <name type="scientific">Metarhizium anisopliae</name>
    <name type="common">Entomophthora anisopliae</name>
    <dbReference type="NCBI Taxonomy" id="5530"/>
    <lineage>
        <taxon>Eukaryota</taxon>
        <taxon>Fungi</taxon>
        <taxon>Dikarya</taxon>
        <taxon>Ascomycota</taxon>
        <taxon>Pezizomycotina</taxon>
        <taxon>Sordariomycetes</taxon>
        <taxon>Hypocreomycetidae</taxon>
        <taxon>Hypocreales</taxon>
        <taxon>Clavicipitaceae</taxon>
        <taxon>Metarhizium</taxon>
    </lineage>
</organism>
<comment type="function">
    <text evidence="3">Secreted chitinase involved in the degradation of chitin, a component of the cell walls of fungi and exoskeletal elements of some animals (including worms and arthropods). Participates in the infection process and directly acts in the penetration process of the host cuticle.</text>
</comment>
<comment type="catalytic activity">
    <reaction evidence="3">
        <text>Random endo-hydrolysis of N-acetyl-beta-D-glucosaminide (1-&gt;4)-beta-linkages in chitin and chitodextrins.</text>
        <dbReference type="EC" id="3.2.1.14"/>
    </reaction>
</comment>
<comment type="biophysicochemical properties">
    <phDependence>
        <text evidence="3">Optimum pH is 5.0.</text>
    </phDependence>
</comment>
<comment type="subcellular location">
    <subcellularLocation>
        <location evidence="3">Secreted</location>
    </subcellularLocation>
</comment>
<comment type="similarity">
    <text evidence="4">Belongs to the glycosyl hydrolase 18 family. Chitinase class V subfamily.</text>
</comment>
<proteinExistence type="evidence at protein level"/>
<evidence type="ECO:0000255" key="1"/>
<evidence type="ECO:0000255" key="2">
    <source>
        <dbReference type="PROSITE-ProRule" id="PRU01258"/>
    </source>
</evidence>
<evidence type="ECO:0000269" key="3">
    <source>
    </source>
</evidence>
<evidence type="ECO:0000305" key="4"/>
<accession>O74199</accession>
<sequence length="522" mass="57454">MLFSMVMFTERWWVGSKDCPRVPALENSNNPWRLERTATAAELSQYGNPTTCEIDNGGVIVADGFQASKGYTGDSIVDYNDAHYKTSVDQDAWGFVRAAYNRGRNTNRQSSGPHPLCTRKCIAWLLMGRLMNAVLTQSDNPALVPNQNATGSNSRPWKPLGKAQSYSNEELNNAPQFNPETLYASDTLIRFNGVNYISQSKEQKVSPSDSNPWRVFVDWTGTKERVGTPKKAWPKHVYAPYVDFTLNTIPDLRALAKNHNVNHFTLAFVVSKDANTTCGTAYGMQNYAQYSKIKALREAGGDVMLSIGGANNAPLAASCKNVDDLMQHYYDIVDNLNLKVLDFDIEGTWVAVQASIERRNLAVKKVQDKWKSEGKDIAIWYTLPILPTGLTPEGMNVLSDAKAKGVELAGVNVMTMDYGNAICQSANTEGQNIHGKCATSAIAFLHSQLKGLHPNKSDAEIDAMMGTTPMVGVNDVQGEVFYLSDARLVMQDAQKRNLGMVGIWSIARDLPAALTCLRNSTA</sequence>
<keyword id="KW-0119">Carbohydrate metabolism</keyword>
<keyword id="KW-0146">Chitin degradation</keyword>
<keyword id="KW-0147">Chitin-binding</keyword>
<keyword id="KW-0325">Glycoprotein</keyword>
<keyword id="KW-0326">Glycosidase</keyword>
<keyword id="KW-0378">Hydrolase</keyword>
<keyword id="KW-0624">Polysaccharide degradation</keyword>
<keyword id="KW-0964">Secreted</keyword>
<keyword id="KW-0732">Signal</keyword>
<keyword id="KW-0843">Virulence</keyword>
<name>CHI11_METAN</name>
<gene>
    <name type="primary">chi11</name>
</gene>
<feature type="signal peptide" evidence="1">
    <location>
        <begin position="1"/>
        <end position="24"/>
    </location>
</feature>
<feature type="chain" id="PRO_0000429872" description="Endochitinase 11">
    <location>
        <begin position="25"/>
        <end position="522"/>
    </location>
</feature>
<feature type="domain" description="GH18" evidence="2">
    <location>
        <begin position="235"/>
        <end position="522"/>
    </location>
</feature>
<feature type="active site" description="Proton donor" evidence="2">
    <location>
        <position position="346"/>
    </location>
</feature>
<feature type="glycosylation site" description="N-linked (GlcNAc...) asparagine" evidence="1">
    <location>
        <position position="148"/>
    </location>
</feature>
<feature type="glycosylation site" description="N-linked (GlcNAc...) asparagine" evidence="1">
    <location>
        <position position="275"/>
    </location>
</feature>
<feature type="glycosylation site" description="N-linked (GlcNAc...) asparagine" evidence="1">
    <location>
        <position position="455"/>
    </location>
</feature>
<feature type="glycosylation site" description="N-linked (GlcNAc...) asparagine" evidence="1">
    <location>
        <position position="519"/>
    </location>
</feature>